<reference key="1">
    <citation type="submission" date="2003-03" db="EMBL/GenBank/DDBJ databases">
        <title>African swine fever virus genomes.</title>
        <authorList>
            <person name="Kutish G.F."/>
            <person name="Rock D.L."/>
        </authorList>
    </citation>
    <scope>NUCLEOTIDE SEQUENCE [GENOMIC DNA]</scope>
</reference>
<protein>
    <recommendedName>
        <fullName evidence="2">mRNA-decapping protein g5R</fullName>
        <shortName>g5Rp</shortName>
        <ecNumber evidence="2">3.1.3.-</ecNumber>
    </recommendedName>
    <alternativeName>
        <fullName evidence="2">ASFV-DP</fullName>
    </alternativeName>
    <alternativeName>
        <fullName>Diphosphoinositol polyphosphate phosphohydrolase</fullName>
        <shortName>DIPP</shortName>
        <ecNumber evidence="2">3.6.1.52</ecNumber>
    </alternativeName>
</protein>
<keyword id="KW-0244">Early protein</keyword>
<keyword id="KW-1262">Eukaryotic host gene expression shutoff by virus</keyword>
<keyword id="KW-1038">Host endoplasmic reticulum</keyword>
<keyword id="KW-1190">Host gene expression shutoff by virus</keyword>
<keyword id="KW-0945">Host-virus interaction</keyword>
<keyword id="KW-0378">Hydrolase</keyword>
<keyword id="KW-0426">Late protein</keyword>
<keyword id="KW-0460">Magnesium</keyword>
<keyword id="KW-0464">Manganese</keyword>
<keyword id="KW-0479">Metal-binding</keyword>
<keyword id="KW-0511">Multifunctional enzyme</keyword>
<keyword id="KW-0694">RNA-binding</keyword>
<organism>
    <name type="scientific">African swine fever virus (isolate Tick/South Africa/Pretoriuskop Pr4/1996)</name>
    <name type="common">ASFV</name>
    <dbReference type="NCBI Taxonomy" id="561443"/>
    <lineage>
        <taxon>Viruses</taxon>
        <taxon>Varidnaviria</taxon>
        <taxon>Bamfordvirae</taxon>
        <taxon>Nucleocytoviricota</taxon>
        <taxon>Pokkesviricetes</taxon>
        <taxon>Asfuvirales</taxon>
        <taxon>Asfarviridae</taxon>
        <taxon>Asfivirus</taxon>
        <taxon>African swine fever virus</taxon>
    </lineage>
</organism>
<dbReference type="EC" id="3.1.3.-" evidence="2"/>
<dbReference type="EC" id="3.6.1.52" evidence="2"/>
<dbReference type="EMBL" id="AY261363">
    <property type="status" value="NOT_ANNOTATED_CDS"/>
    <property type="molecule type" value="Genomic_DNA"/>
</dbReference>
<dbReference type="SMR" id="P0C996"/>
<dbReference type="Proteomes" id="UP000000859">
    <property type="component" value="Segment"/>
</dbReference>
<dbReference type="GO" id="GO:0044168">
    <property type="term" value="C:host cell rough endoplasmic reticulum"/>
    <property type="evidence" value="ECO:0007669"/>
    <property type="project" value="UniProtKB-SubCell"/>
</dbReference>
<dbReference type="GO" id="GO:0004081">
    <property type="term" value="F:bis(5'-nucleosyl)-tetraphosphatase (asymmetrical) activity"/>
    <property type="evidence" value="ECO:0007669"/>
    <property type="project" value="TreeGrafter"/>
</dbReference>
<dbReference type="GO" id="GO:0008486">
    <property type="term" value="F:diphosphoinositol-polyphosphate diphosphatase activity"/>
    <property type="evidence" value="ECO:0007669"/>
    <property type="project" value="UniProtKB-EC"/>
</dbReference>
<dbReference type="GO" id="GO:0046872">
    <property type="term" value="F:metal ion binding"/>
    <property type="evidence" value="ECO:0007669"/>
    <property type="project" value="UniProtKB-KW"/>
</dbReference>
<dbReference type="GO" id="GO:0003723">
    <property type="term" value="F:RNA binding"/>
    <property type="evidence" value="ECO:0007669"/>
    <property type="project" value="UniProtKB-KW"/>
</dbReference>
<dbReference type="GO" id="GO:0006167">
    <property type="term" value="P:AMP biosynthetic process"/>
    <property type="evidence" value="ECO:0007669"/>
    <property type="project" value="TreeGrafter"/>
</dbReference>
<dbReference type="GO" id="GO:0006754">
    <property type="term" value="P:ATP biosynthetic process"/>
    <property type="evidence" value="ECO:0007669"/>
    <property type="project" value="TreeGrafter"/>
</dbReference>
<dbReference type="GO" id="GO:0039657">
    <property type="term" value="P:symbiont-mediated suppression of host gene expression"/>
    <property type="evidence" value="ECO:0007669"/>
    <property type="project" value="UniProtKB-KW"/>
</dbReference>
<dbReference type="Gene3D" id="3.90.79.10">
    <property type="entry name" value="Nucleoside Triphosphate Pyrophosphohydrolase"/>
    <property type="match status" value="1"/>
</dbReference>
<dbReference type="InterPro" id="IPR015797">
    <property type="entry name" value="NUDIX_hydrolase-like_dom_sf"/>
</dbReference>
<dbReference type="InterPro" id="IPR020084">
    <property type="entry name" value="NUDIX_hydrolase_CS"/>
</dbReference>
<dbReference type="InterPro" id="IPR000086">
    <property type="entry name" value="NUDIX_hydrolase_dom"/>
</dbReference>
<dbReference type="InterPro" id="IPR051325">
    <property type="entry name" value="Nudix_hydrolase_domain"/>
</dbReference>
<dbReference type="PANTHER" id="PTHR21340:SF0">
    <property type="entry name" value="BIS(5'-NUCLEOSYL)-TETRAPHOSPHATASE [ASYMMETRICAL]"/>
    <property type="match status" value="1"/>
</dbReference>
<dbReference type="PANTHER" id="PTHR21340">
    <property type="entry name" value="DIADENOSINE 5,5-P1,P4-TETRAPHOSPHATE PYROPHOSPHOHYDROLASE MUTT"/>
    <property type="match status" value="1"/>
</dbReference>
<dbReference type="Pfam" id="PF00293">
    <property type="entry name" value="NUDIX"/>
    <property type="match status" value="1"/>
</dbReference>
<dbReference type="SUPFAM" id="SSF55811">
    <property type="entry name" value="Nudix"/>
    <property type="match status" value="1"/>
</dbReference>
<dbReference type="PROSITE" id="PS51462">
    <property type="entry name" value="NUDIX"/>
    <property type="match status" value="1"/>
</dbReference>
<dbReference type="PROSITE" id="PS00893">
    <property type="entry name" value="NUDIX_BOX"/>
    <property type="match status" value="1"/>
</dbReference>
<proteinExistence type="inferred from homology"/>
<comment type="function">
    <text evidence="2">Decapping enzyme required for the removal of the 5'-end m7GpppN cap tethered to viral and host mRNAs to allow their decay in cells. May therefore accelerate viral and cellular mRNA turnover to eliminate competing host mRNAs and allow stage-specific synthesis of viral proteins. Acceleration of the turnover of cellular transcripts may even promote the shutoff of host protein synthesis. In addition to the mRNA cap, g5R also efficiently hydrolyzes diphosphoinositol polyphosphates. Down-regulation of the level of PP-InsP5 (diphosphoinositol pentakisphosphate) may play a role in viral manipulation of the cellular secretory pathway, a step necessary for the formation of virions. Binds viral and cellular poly(A) mRNAs, thereby decreasing both types of mRNAs.</text>
</comment>
<comment type="catalytic activity">
    <reaction evidence="2">
        <text>diphospho-myo-inositol polyphosphate + H2O = myo-inositol polyphosphate + phosphate.</text>
        <dbReference type="EC" id="3.6.1.52"/>
    </reaction>
</comment>
<comment type="cofactor">
    <cofactor evidence="2">
        <name>Mg(2+)</name>
        <dbReference type="ChEBI" id="CHEBI:18420"/>
    </cofactor>
    <cofactor evidence="2">
        <name>Mn(2+)</name>
        <dbReference type="ChEBI" id="CHEBI:29035"/>
    </cofactor>
</comment>
<comment type="subunit">
    <text evidence="2">Interacts with host RPL23A.</text>
</comment>
<comment type="subcellular location">
    <subcellularLocation>
        <location evidence="2">Host rough endoplasmic reticulum</location>
    </subcellularLocation>
    <text evidence="2">Accumulates at the periphery of the viral factories.</text>
</comment>
<comment type="induction">
    <text evidence="4">Expressed early and up to late in the infection cycle.</text>
</comment>
<comment type="similarity">
    <text evidence="4">Belongs to the Nudix hydrolase family. DIPP subfamily.</text>
</comment>
<sequence length="250" mass="29823">MDTAMQLKTSIGLITCRMNTQNNQIETILVQKRYSLAFSEFIHCHYSINANQGHLIKMFNNMTINERLLVKTLDFDRMWYHIWIETPVYELYHKKYQKFRKNWLLPDNGKKLISLINQAKGSGTLLWEIPKGKPKEDESDLTCAIREFEEETGITREYYQILPEFKKSMSYFDGKTEYKHIYFLAMLCKSLEEPNMNLSLQYENRIAEISKISWQNMEAVRFISKRQSLNLEPIIGPAFNFIKNYLRYKH</sequence>
<name>DIPP_ASFP4</name>
<feature type="chain" id="PRO_0000373096" description="mRNA-decapping protein g5R">
    <location>
        <begin position="1"/>
        <end position="250"/>
    </location>
</feature>
<feature type="domain" description="Nudix hydrolase" evidence="3">
    <location>
        <begin position="97"/>
        <end position="243"/>
    </location>
</feature>
<feature type="short sequence motif" description="Nudix box">
    <location>
        <begin position="132"/>
        <end position="153"/>
    </location>
</feature>
<feature type="active site" description="Nucleophile" evidence="2">
    <location>
        <position position="147"/>
    </location>
</feature>
<feature type="binding site" evidence="1">
    <location>
        <position position="138"/>
    </location>
    <ligand>
        <name>Mg(2+)</name>
        <dbReference type="ChEBI" id="CHEBI:18420"/>
    </ligand>
</feature>
<feature type="binding site" evidence="1">
    <location>
        <position position="151"/>
    </location>
    <ligand>
        <name>Mg(2+)</name>
        <dbReference type="ChEBI" id="CHEBI:18420"/>
    </ligand>
</feature>
<feature type="binding site" evidence="1">
    <location>
        <position position="173"/>
    </location>
    <ligand>
        <name>Mg(2+)</name>
        <dbReference type="ChEBI" id="CHEBI:18420"/>
    </ligand>
</feature>
<organismHost>
    <name type="scientific">Ornithodoros</name>
    <name type="common">relapsing fever ticks</name>
    <dbReference type="NCBI Taxonomy" id="6937"/>
</organismHost>
<organismHost>
    <name type="scientific">Phacochoerus aethiopicus</name>
    <name type="common">Warthog</name>
    <dbReference type="NCBI Taxonomy" id="85517"/>
</organismHost>
<organismHost>
    <name type="scientific">Phacochoerus africanus</name>
    <name type="common">Warthog</name>
    <dbReference type="NCBI Taxonomy" id="41426"/>
</organismHost>
<organismHost>
    <name type="scientific">Potamochoerus larvatus</name>
    <name type="common">Bushpig</name>
    <dbReference type="NCBI Taxonomy" id="273792"/>
</organismHost>
<organismHost>
    <name type="scientific">Sus scrofa</name>
    <name type="common">Pig</name>
    <dbReference type="NCBI Taxonomy" id="9823"/>
</organismHost>
<accession>P0C996</accession>
<gene>
    <name type="ordered locus">Pret-114</name>
</gene>
<evidence type="ECO:0000250" key="1"/>
<evidence type="ECO:0000250" key="2">
    <source>
        <dbReference type="UniProtKB" id="P32092"/>
    </source>
</evidence>
<evidence type="ECO:0000255" key="3">
    <source>
        <dbReference type="PROSITE-ProRule" id="PRU00794"/>
    </source>
</evidence>
<evidence type="ECO:0000305" key="4"/>